<proteinExistence type="inferred from homology"/>
<reference key="1">
    <citation type="submission" date="2002-11" db="EMBL/GenBank/DDBJ databases">
        <title>Identification of complete keratin-associated protein (KAP) gene cluster spanning 800 kb region on human chromosome 21q22.11.</title>
        <authorList>
            <person name="Obayashi I."/>
            <person name="Shibuya K."/>
            <person name="Minoshima S."/>
            <person name="Kudoh J."/>
            <person name="Shimizu N."/>
        </authorList>
    </citation>
    <scope>NUCLEOTIDE SEQUENCE [MRNA]</scope>
    <source>
        <tissue>Hair root</tissue>
    </source>
</reference>
<evidence type="ECO:0000250" key="1"/>
<evidence type="ECO:0000305" key="2"/>
<organism>
    <name type="scientific">Homo sapiens</name>
    <name type="common">Human</name>
    <dbReference type="NCBI Taxonomy" id="9606"/>
    <lineage>
        <taxon>Eukaryota</taxon>
        <taxon>Metazoa</taxon>
        <taxon>Chordata</taxon>
        <taxon>Craniata</taxon>
        <taxon>Vertebrata</taxon>
        <taxon>Euteleostomi</taxon>
        <taxon>Mammalia</taxon>
        <taxon>Eutheria</taxon>
        <taxon>Euarchontoglires</taxon>
        <taxon>Primates</taxon>
        <taxon>Haplorrhini</taxon>
        <taxon>Catarrhini</taxon>
        <taxon>Hominidae</taxon>
        <taxon>Homo</taxon>
    </lineage>
</organism>
<feature type="chain" id="PRO_0000307915" description="Keratin-associated protein 20-3">
    <location>
        <begin position="1"/>
        <end position="44"/>
    </location>
</feature>
<keyword id="KW-0416">Keratin</keyword>
<keyword id="KW-1185">Reference proteome</keyword>
<keyword id="KW-0677">Repeat</keyword>
<gene>
    <name type="primary">KRTAP20-3</name>
    <name type="synonym">KAP20.3</name>
</gene>
<accession>Q3LI60</accession>
<dbReference type="EMBL" id="AB096958">
    <property type="protein sequence ID" value="BAE46373.1"/>
    <property type="molecule type" value="mRNA"/>
</dbReference>
<dbReference type="CCDS" id="CCDS46642.1"/>
<dbReference type="RefSeq" id="NP_001121549.1">
    <property type="nucleotide sequence ID" value="NM_001128077.1"/>
</dbReference>
<dbReference type="STRING" id="9606.ENSP00000372276"/>
<dbReference type="iPTMnet" id="Q3LI60"/>
<dbReference type="PhosphoSitePlus" id="Q3LI60"/>
<dbReference type="BioMuta" id="KRTAP20-3"/>
<dbReference type="PaxDb" id="9606-ENSP00000372276"/>
<dbReference type="Antibodypedia" id="64691">
    <property type="antibodies" value="4 antibodies from 4 providers"/>
</dbReference>
<dbReference type="DNASU" id="337985"/>
<dbReference type="Ensembl" id="ENST00000382826.2">
    <property type="protein sequence ID" value="ENSP00000372276.2"/>
    <property type="gene ID" value="ENSG00000206104.2"/>
</dbReference>
<dbReference type="GeneID" id="337985"/>
<dbReference type="KEGG" id="hsa:337985"/>
<dbReference type="MANE-Select" id="ENST00000382826.2">
    <property type="protein sequence ID" value="ENSP00000372276.2"/>
    <property type="RefSeq nucleotide sequence ID" value="NM_001128077.1"/>
    <property type="RefSeq protein sequence ID" value="NP_001121549.1"/>
</dbReference>
<dbReference type="UCSC" id="uc010gls.1">
    <property type="organism name" value="human"/>
</dbReference>
<dbReference type="AGR" id="HGNC:34001"/>
<dbReference type="CTD" id="337985"/>
<dbReference type="GeneCards" id="KRTAP20-3"/>
<dbReference type="HGNC" id="HGNC:34001">
    <property type="gene designation" value="KRTAP20-3"/>
</dbReference>
<dbReference type="HPA" id="ENSG00000206104">
    <property type="expression patterns" value="Not detected"/>
</dbReference>
<dbReference type="neXtProt" id="NX_Q3LI60"/>
<dbReference type="PharmGKB" id="PA162393749"/>
<dbReference type="VEuPathDB" id="HostDB:ENSG00000206104"/>
<dbReference type="eggNOG" id="ENOG502TM3U">
    <property type="taxonomic scope" value="Eukaryota"/>
</dbReference>
<dbReference type="GeneTree" id="ENSGT00410000029383"/>
<dbReference type="HOGENOM" id="CLU_3224409_0_0_1"/>
<dbReference type="InParanoid" id="Q3LI60"/>
<dbReference type="PAN-GO" id="Q3LI60">
    <property type="GO annotations" value="0 GO annotations based on evolutionary models"/>
</dbReference>
<dbReference type="TreeFam" id="TF343720"/>
<dbReference type="PathwayCommons" id="Q3LI60"/>
<dbReference type="SignaLink" id="Q3LI60"/>
<dbReference type="BioGRID-ORCS" id="337985">
    <property type="hits" value="16 hits in 1120 CRISPR screens"/>
</dbReference>
<dbReference type="GenomeRNAi" id="337985"/>
<dbReference type="Pharos" id="Q3LI60">
    <property type="development level" value="Tdark"/>
</dbReference>
<dbReference type="PRO" id="PR:Q3LI60"/>
<dbReference type="Proteomes" id="UP000005640">
    <property type="component" value="Chromosome 21"/>
</dbReference>
<dbReference type="Bgee" id="ENSG00000206104">
    <property type="expression patterns" value="Expressed in male germ line stem cell (sensu Vertebrata) in testis and 3 other cell types or tissues"/>
</dbReference>
<dbReference type="GO" id="GO:0005882">
    <property type="term" value="C:intermediate filament"/>
    <property type="evidence" value="ECO:0007669"/>
    <property type="project" value="UniProtKB-KW"/>
</dbReference>
<comment type="function">
    <text>In the hair cortex, hair keratin intermediate filaments are embedded in an interfilamentous matrix, consisting of hair keratin-associated proteins (KRTAP), which are essential for the formation of a rigid and resistant hair shaft through their extensive disulfide bond cross-linking with abundant cysteine residues of hair keratins. The matrix proteins include the high-sulfur and high-glycine-tyrosine keratins.</text>
</comment>
<comment type="subunit">
    <text evidence="1">Interacts with hair keratins.</text>
</comment>
<comment type="similarity">
    <text evidence="2">Belongs to the KRTAP type 20 family.</text>
</comment>
<sequence>MSYYGNYYGGLGYGYDCKYSYTSGFGAFRILDCGYRCGCGGVWI</sequence>
<protein>
    <recommendedName>
        <fullName>Keratin-associated protein 20-3</fullName>
    </recommendedName>
</protein>
<name>KR203_HUMAN</name>